<keyword id="KW-0963">Cytoplasm</keyword>
<keyword id="KW-0238">DNA-binding</keyword>
<keyword id="KW-0255">Endonuclease</keyword>
<keyword id="KW-0378">Hydrolase</keyword>
<keyword id="KW-0540">Nuclease</keyword>
<keyword id="KW-1185">Reference proteome</keyword>
<keyword id="KW-0694">RNA-binding</keyword>
<protein>
    <recommendedName>
        <fullName evidence="1">Endoribonuclease SymE</fullName>
        <ecNumber evidence="1">3.1.-.-</ecNumber>
    </recommendedName>
</protein>
<feature type="chain" id="PRO_1000164507" description="Endoribonuclease SymE">
    <location>
        <begin position="1"/>
        <end position="113"/>
    </location>
</feature>
<feature type="domain" description="SpoVT-AbrB" evidence="2">
    <location>
        <begin position="29"/>
        <end position="74"/>
    </location>
</feature>
<name>SYME_ECO55</name>
<gene>
    <name evidence="1" type="primary">symE</name>
    <name type="ordered locus">EC55989_5009</name>
</gene>
<organism>
    <name type="scientific">Escherichia coli (strain 55989 / EAEC)</name>
    <dbReference type="NCBI Taxonomy" id="585055"/>
    <lineage>
        <taxon>Bacteria</taxon>
        <taxon>Pseudomonadati</taxon>
        <taxon>Pseudomonadota</taxon>
        <taxon>Gammaproteobacteria</taxon>
        <taxon>Enterobacterales</taxon>
        <taxon>Enterobacteriaceae</taxon>
        <taxon>Escherichia</taxon>
    </lineage>
</organism>
<comment type="function">
    <text evidence="1">Involved in the degradation and recycling of damaged RNA. It is itself a target for degradation by the ATP-dependent protease Lon.</text>
</comment>
<comment type="subcellular location">
    <subcellularLocation>
        <location evidence="1">Cytoplasm</location>
    </subcellularLocation>
</comment>
<comment type="similarity">
    <text evidence="1">Belongs to the SymE family.</text>
</comment>
<evidence type="ECO:0000255" key="1">
    <source>
        <dbReference type="HAMAP-Rule" id="MF_01193"/>
    </source>
</evidence>
<evidence type="ECO:0000255" key="2">
    <source>
        <dbReference type="PROSITE-ProRule" id="PRU01076"/>
    </source>
</evidence>
<dbReference type="EC" id="3.1.-.-" evidence="1"/>
<dbReference type="EMBL" id="CU928145">
    <property type="protein sequence ID" value="CAV02124.1"/>
    <property type="molecule type" value="Genomic_DNA"/>
</dbReference>
<dbReference type="RefSeq" id="WP_000132630.1">
    <property type="nucleotide sequence ID" value="NC_011748.1"/>
</dbReference>
<dbReference type="KEGG" id="eck:EC55989_5009"/>
<dbReference type="HOGENOM" id="CLU_151239_0_0_6"/>
<dbReference type="Proteomes" id="UP000000746">
    <property type="component" value="Chromosome"/>
</dbReference>
<dbReference type="GO" id="GO:0005737">
    <property type="term" value="C:cytoplasm"/>
    <property type="evidence" value="ECO:0007669"/>
    <property type="project" value="UniProtKB-SubCell"/>
</dbReference>
<dbReference type="GO" id="GO:0003677">
    <property type="term" value="F:DNA binding"/>
    <property type="evidence" value="ECO:0007669"/>
    <property type="project" value="UniProtKB-KW"/>
</dbReference>
<dbReference type="GO" id="GO:0003723">
    <property type="term" value="F:RNA binding"/>
    <property type="evidence" value="ECO:0007669"/>
    <property type="project" value="UniProtKB-KW"/>
</dbReference>
<dbReference type="GO" id="GO:0004521">
    <property type="term" value="F:RNA endonuclease activity"/>
    <property type="evidence" value="ECO:0007669"/>
    <property type="project" value="UniProtKB-UniRule"/>
</dbReference>
<dbReference type="GO" id="GO:0016070">
    <property type="term" value="P:RNA metabolic process"/>
    <property type="evidence" value="ECO:0007669"/>
    <property type="project" value="InterPro"/>
</dbReference>
<dbReference type="HAMAP" id="MF_01193">
    <property type="entry name" value="Endoribonucl_SymE"/>
    <property type="match status" value="1"/>
</dbReference>
<dbReference type="InterPro" id="IPR007159">
    <property type="entry name" value="SpoVT-AbrB_dom"/>
</dbReference>
<dbReference type="InterPro" id="IPR014944">
    <property type="entry name" value="Toxin_SymE-like"/>
</dbReference>
<dbReference type="InterPro" id="IPR020883">
    <property type="entry name" value="TypeI_TA_SymE"/>
</dbReference>
<dbReference type="NCBIfam" id="NF010128">
    <property type="entry name" value="PRK13605.1"/>
    <property type="match status" value="1"/>
</dbReference>
<dbReference type="Pfam" id="PF08845">
    <property type="entry name" value="SymE_toxin"/>
    <property type="match status" value="1"/>
</dbReference>
<dbReference type="PROSITE" id="PS51740">
    <property type="entry name" value="SPOVT_ABRB"/>
    <property type="match status" value="1"/>
</dbReference>
<proteinExistence type="inferred from homology"/>
<accession>B7LDZ6</accession>
<sequence>MTDTHSIAQPFEAEVSPANNRQLTVSYASRYPDYSRIPAITLKGQWLEAAGFATGTVVDVKVMEGCIVLTAQPPAAAESELMQSLRQVCKLSARKQRQVQEFIGVIAGKQKVA</sequence>
<reference key="1">
    <citation type="journal article" date="2009" name="PLoS Genet.">
        <title>Organised genome dynamics in the Escherichia coli species results in highly diverse adaptive paths.</title>
        <authorList>
            <person name="Touchon M."/>
            <person name="Hoede C."/>
            <person name="Tenaillon O."/>
            <person name="Barbe V."/>
            <person name="Baeriswyl S."/>
            <person name="Bidet P."/>
            <person name="Bingen E."/>
            <person name="Bonacorsi S."/>
            <person name="Bouchier C."/>
            <person name="Bouvet O."/>
            <person name="Calteau A."/>
            <person name="Chiapello H."/>
            <person name="Clermont O."/>
            <person name="Cruveiller S."/>
            <person name="Danchin A."/>
            <person name="Diard M."/>
            <person name="Dossat C."/>
            <person name="Karoui M.E."/>
            <person name="Frapy E."/>
            <person name="Garry L."/>
            <person name="Ghigo J.M."/>
            <person name="Gilles A.M."/>
            <person name="Johnson J."/>
            <person name="Le Bouguenec C."/>
            <person name="Lescat M."/>
            <person name="Mangenot S."/>
            <person name="Martinez-Jehanne V."/>
            <person name="Matic I."/>
            <person name="Nassif X."/>
            <person name="Oztas S."/>
            <person name="Petit M.A."/>
            <person name="Pichon C."/>
            <person name="Rouy Z."/>
            <person name="Ruf C.S."/>
            <person name="Schneider D."/>
            <person name="Tourret J."/>
            <person name="Vacherie B."/>
            <person name="Vallenet D."/>
            <person name="Medigue C."/>
            <person name="Rocha E.P.C."/>
            <person name="Denamur E."/>
        </authorList>
    </citation>
    <scope>NUCLEOTIDE SEQUENCE [LARGE SCALE GENOMIC DNA]</scope>
    <source>
        <strain>55989 / EAEC</strain>
    </source>
</reference>